<accession>Q4K689</accession>
<protein>
    <recommendedName>
        <fullName evidence="1">Large ribosomal subunit protein bL25</fullName>
    </recommendedName>
    <alternativeName>
        <fullName evidence="2">50S ribosomal protein L25</fullName>
    </alternativeName>
    <alternativeName>
        <fullName evidence="1">General stress protein CTC</fullName>
    </alternativeName>
</protein>
<evidence type="ECO:0000255" key="1">
    <source>
        <dbReference type="HAMAP-Rule" id="MF_01334"/>
    </source>
</evidence>
<evidence type="ECO:0000305" key="2"/>
<organism>
    <name type="scientific">Pseudomonas fluorescens (strain ATCC BAA-477 / NRRL B-23932 / Pf-5)</name>
    <dbReference type="NCBI Taxonomy" id="220664"/>
    <lineage>
        <taxon>Bacteria</taxon>
        <taxon>Pseudomonadati</taxon>
        <taxon>Pseudomonadota</taxon>
        <taxon>Gammaproteobacteria</taxon>
        <taxon>Pseudomonadales</taxon>
        <taxon>Pseudomonadaceae</taxon>
        <taxon>Pseudomonas</taxon>
    </lineage>
</organism>
<gene>
    <name evidence="1" type="primary">rplY</name>
    <name evidence="1" type="synonym">ctc</name>
    <name type="ordered locus">PFL_5166</name>
</gene>
<feature type="chain" id="PRO_0000244226" description="Large ribosomal subunit protein bL25">
    <location>
        <begin position="1"/>
        <end position="199"/>
    </location>
</feature>
<name>RL25_PSEF5</name>
<comment type="function">
    <text evidence="1">This is one of the proteins that binds to the 5S RNA in the ribosome where it forms part of the central protuberance.</text>
</comment>
<comment type="subunit">
    <text evidence="1">Part of the 50S ribosomal subunit; part of the 5S rRNA/L5/L18/L25 subcomplex. Contacts the 5S rRNA. Binds to the 5S rRNA independently of L5 and L18.</text>
</comment>
<comment type="similarity">
    <text evidence="1">Belongs to the bacterial ribosomal protein bL25 family. CTC subfamily.</text>
</comment>
<reference key="1">
    <citation type="journal article" date="2005" name="Nat. Biotechnol.">
        <title>Complete genome sequence of the plant commensal Pseudomonas fluorescens Pf-5.</title>
        <authorList>
            <person name="Paulsen I.T."/>
            <person name="Press C.M."/>
            <person name="Ravel J."/>
            <person name="Kobayashi D.Y."/>
            <person name="Myers G.S.A."/>
            <person name="Mavrodi D.V."/>
            <person name="DeBoy R.T."/>
            <person name="Seshadri R."/>
            <person name="Ren Q."/>
            <person name="Madupu R."/>
            <person name="Dodson R.J."/>
            <person name="Durkin A.S."/>
            <person name="Brinkac L.M."/>
            <person name="Daugherty S.C."/>
            <person name="Sullivan S.A."/>
            <person name="Rosovitz M.J."/>
            <person name="Gwinn M.L."/>
            <person name="Zhou L."/>
            <person name="Schneider D.J."/>
            <person name="Cartinhour S.W."/>
            <person name="Nelson W.C."/>
            <person name="Weidman J."/>
            <person name="Watkins K."/>
            <person name="Tran K."/>
            <person name="Khouri H."/>
            <person name="Pierson E.A."/>
            <person name="Pierson L.S. III"/>
            <person name="Thomashow L.S."/>
            <person name="Loper J.E."/>
        </authorList>
    </citation>
    <scope>NUCLEOTIDE SEQUENCE [LARGE SCALE GENOMIC DNA]</scope>
    <source>
        <strain>ATCC BAA-477 / NRRL B-23932 / Pf-5</strain>
    </source>
</reference>
<sequence>MNDFTLNAEVRSDLGKGASRRLRRLASLVPAVVYGGDKAPESISMLAKEVAKLLENEAAYSHIIELNVGGTKQNVVIKALQRHPAKGHVMHADFVRVVAGQKLTAIVPVHFINEAAPVKKGGEISHVIAEIEVSCLPKDLPEFIEVDLADAEIGTIVHLSDIKAPKGVEFVALAHGNDLAVANVHAPRVAPEAAEGAAE</sequence>
<dbReference type="EMBL" id="CP000076">
    <property type="protein sequence ID" value="AAY94386.1"/>
    <property type="molecule type" value="Genomic_DNA"/>
</dbReference>
<dbReference type="RefSeq" id="WP_011063411.1">
    <property type="nucleotide sequence ID" value="NC_004129.6"/>
</dbReference>
<dbReference type="SMR" id="Q4K689"/>
<dbReference type="STRING" id="220664.PFL_5166"/>
<dbReference type="KEGG" id="pfl:PFL_5166"/>
<dbReference type="PATRIC" id="fig|220664.5.peg.5278"/>
<dbReference type="eggNOG" id="COG1825">
    <property type="taxonomic scope" value="Bacteria"/>
</dbReference>
<dbReference type="HOGENOM" id="CLU_075939_0_1_6"/>
<dbReference type="Proteomes" id="UP000008540">
    <property type="component" value="Chromosome"/>
</dbReference>
<dbReference type="GO" id="GO:0022625">
    <property type="term" value="C:cytosolic large ribosomal subunit"/>
    <property type="evidence" value="ECO:0007669"/>
    <property type="project" value="TreeGrafter"/>
</dbReference>
<dbReference type="GO" id="GO:0008097">
    <property type="term" value="F:5S rRNA binding"/>
    <property type="evidence" value="ECO:0007669"/>
    <property type="project" value="InterPro"/>
</dbReference>
<dbReference type="GO" id="GO:0003735">
    <property type="term" value="F:structural constituent of ribosome"/>
    <property type="evidence" value="ECO:0007669"/>
    <property type="project" value="InterPro"/>
</dbReference>
<dbReference type="GO" id="GO:0006412">
    <property type="term" value="P:translation"/>
    <property type="evidence" value="ECO:0007669"/>
    <property type="project" value="UniProtKB-UniRule"/>
</dbReference>
<dbReference type="CDD" id="cd00495">
    <property type="entry name" value="Ribosomal_L25_TL5_CTC"/>
    <property type="match status" value="1"/>
</dbReference>
<dbReference type="Gene3D" id="2.170.120.20">
    <property type="entry name" value="Ribosomal protein L25, beta domain"/>
    <property type="match status" value="1"/>
</dbReference>
<dbReference type="Gene3D" id="2.40.240.10">
    <property type="entry name" value="Ribosomal Protein L25, Chain P"/>
    <property type="match status" value="1"/>
</dbReference>
<dbReference type="HAMAP" id="MF_01334">
    <property type="entry name" value="Ribosomal_bL25_CTC"/>
    <property type="match status" value="1"/>
</dbReference>
<dbReference type="InterPro" id="IPR020056">
    <property type="entry name" value="Rbsml_bL25/Gln-tRNA_synth_N"/>
</dbReference>
<dbReference type="InterPro" id="IPR011035">
    <property type="entry name" value="Ribosomal_bL25/Gln-tRNA_synth"/>
</dbReference>
<dbReference type="InterPro" id="IPR020057">
    <property type="entry name" value="Ribosomal_bL25_b-dom"/>
</dbReference>
<dbReference type="InterPro" id="IPR037121">
    <property type="entry name" value="Ribosomal_bL25_C"/>
</dbReference>
<dbReference type="InterPro" id="IPR001021">
    <property type="entry name" value="Ribosomal_bL25_long"/>
</dbReference>
<dbReference type="InterPro" id="IPR029751">
    <property type="entry name" value="Ribosomal_L25_dom"/>
</dbReference>
<dbReference type="InterPro" id="IPR020930">
    <property type="entry name" value="Ribosomal_uL5_bac-type"/>
</dbReference>
<dbReference type="NCBIfam" id="TIGR00731">
    <property type="entry name" value="bL25_bact_ctc"/>
    <property type="match status" value="1"/>
</dbReference>
<dbReference type="NCBIfam" id="NF004128">
    <property type="entry name" value="PRK05618.1-2"/>
    <property type="match status" value="1"/>
</dbReference>
<dbReference type="NCBIfam" id="NF004130">
    <property type="entry name" value="PRK05618.1-5"/>
    <property type="match status" value="1"/>
</dbReference>
<dbReference type="NCBIfam" id="NF004612">
    <property type="entry name" value="PRK05943.1"/>
    <property type="match status" value="1"/>
</dbReference>
<dbReference type="PANTHER" id="PTHR33284">
    <property type="entry name" value="RIBOSOMAL PROTEIN L25/GLN-TRNA SYNTHETASE, ANTI-CODON-BINDING DOMAIN-CONTAINING PROTEIN"/>
    <property type="match status" value="1"/>
</dbReference>
<dbReference type="PANTHER" id="PTHR33284:SF1">
    <property type="entry name" value="RIBOSOMAL PROTEIN L25_GLN-TRNA SYNTHETASE, ANTI-CODON-BINDING DOMAIN-CONTAINING PROTEIN"/>
    <property type="match status" value="1"/>
</dbReference>
<dbReference type="Pfam" id="PF01386">
    <property type="entry name" value="Ribosomal_L25p"/>
    <property type="match status" value="1"/>
</dbReference>
<dbReference type="Pfam" id="PF14693">
    <property type="entry name" value="Ribosomal_TL5_C"/>
    <property type="match status" value="1"/>
</dbReference>
<dbReference type="SUPFAM" id="SSF50715">
    <property type="entry name" value="Ribosomal protein L25-like"/>
    <property type="match status" value="1"/>
</dbReference>
<proteinExistence type="inferred from homology"/>
<keyword id="KW-0687">Ribonucleoprotein</keyword>
<keyword id="KW-0689">Ribosomal protein</keyword>
<keyword id="KW-0694">RNA-binding</keyword>
<keyword id="KW-0699">rRNA-binding</keyword>